<name>LDCA_PSEAE</name>
<evidence type="ECO:0000269" key="1">
    <source>
    </source>
</evidence>
<evidence type="ECO:0000269" key="2">
    <source>
    </source>
</evidence>
<evidence type="ECO:0000303" key="3">
    <source>
    </source>
</evidence>
<evidence type="ECO:0000305" key="4"/>
<gene>
    <name evidence="3" type="primary">ldcA</name>
    <name type="ordered locus">PA1818</name>
</gene>
<comment type="function">
    <text evidence="1 2">Plays an essential role in lysine utilization by acting as a lysine decarboxylase.</text>
</comment>
<comment type="catalytic activity">
    <reaction evidence="1">
        <text>L-lysine + H(+) = cadaverine + CO2</text>
        <dbReference type="Rhea" id="RHEA:22352"/>
        <dbReference type="ChEBI" id="CHEBI:15378"/>
        <dbReference type="ChEBI" id="CHEBI:16526"/>
        <dbReference type="ChEBI" id="CHEBI:32551"/>
        <dbReference type="ChEBI" id="CHEBI:58384"/>
        <dbReference type="EC" id="4.1.1.18"/>
    </reaction>
</comment>
<comment type="subunit">
    <text evidence="2">Homodecamer.</text>
</comment>
<comment type="induction">
    <text evidence="1">Transcriptionally regulated by ArgR in response to arginine but not lysine showing a tight connection of lysine catabolism to the arginine regulatory network.</text>
</comment>
<comment type="disruption phenotype">
    <text evidence="1 2">Loss of growth on lysine as sole carbon source (PubMed:20833801). Inactivation also leads to a decrease of virulence showing the importance of LdcA involvement in polyamine homeostasis during infection of the host (PubMed:31653338).</text>
</comment>
<comment type="similarity">
    <text evidence="4">Belongs to the Orn/Lys/Arg decarboxylase class-I family.</text>
</comment>
<reference key="1">
    <citation type="journal article" date="2000" name="Nature">
        <title>Complete genome sequence of Pseudomonas aeruginosa PAO1, an opportunistic pathogen.</title>
        <authorList>
            <person name="Stover C.K."/>
            <person name="Pham X.-Q.T."/>
            <person name="Erwin A.L."/>
            <person name="Mizoguchi S.D."/>
            <person name="Warrener P."/>
            <person name="Hickey M.J."/>
            <person name="Brinkman F.S.L."/>
            <person name="Hufnagle W.O."/>
            <person name="Kowalik D.J."/>
            <person name="Lagrou M."/>
            <person name="Garber R.L."/>
            <person name="Goltry L."/>
            <person name="Tolentino E."/>
            <person name="Westbrock-Wadman S."/>
            <person name="Yuan Y."/>
            <person name="Brody L.L."/>
            <person name="Coulter S.N."/>
            <person name="Folger K.R."/>
            <person name="Kas A."/>
            <person name="Larbig K."/>
            <person name="Lim R.M."/>
            <person name="Smith K.A."/>
            <person name="Spencer D.H."/>
            <person name="Wong G.K.-S."/>
            <person name="Wu Z."/>
            <person name="Paulsen I.T."/>
            <person name="Reizer J."/>
            <person name="Saier M.H. Jr."/>
            <person name="Hancock R.E.W."/>
            <person name="Lory S."/>
            <person name="Olson M.V."/>
        </authorList>
    </citation>
    <scope>NUCLEOTIDE SEQUENCE [LARGE SCALE GENOMIC DNA]</scope>
    <source>
        <strain>ATCC 15692 / DSM 22644 / CIP 104116 / JCM 14847 / LMG 12228 / 1C / PRS 101 / PAO1</strain>
    </source>
</reference>
<reference key="2">
    <citation type="journal article" date="2010" name="J. Bacteriol.">
        <title>L-lysine catabolism is controlled by L-arginine and ArgR in Pseudomonas aeruginosa PAO1.</title>
        <authorList>
            <person name="Chou H.T."/>
            <person name="Hegazy M."/>
            <person name="Lu C.D."/>
        </authorList>
    </citation>
    <scope>FUNCTION</scope>
    <scope>INDUCTION BY ARGININE</scope>
    <scope>DISRUPTION PHENOTYPE</scope>
    <scope>CATALYTIC ACTIVITY</scope>
</reference>
<reference key="3">
    <citation type="journal article" date="2019" name="Structure">
        <title>Structure, Function, and Evolution of the Pseudomonas aeruginosa Lysine Decarboxylase LdcA.</title>
        <authorList>
            <person name="Kandiah E."/>
            <person name="Carriel D."/>
            <person name="Garcia P.S."/>
            <person name="Felix J."/>
            <person name="Banzhaf M."/>
            <person name="Kritikos G."/>
            <person name="Bacia-Verloop M."/>
            <person name="Brochier-Armanet C."/>
            <person name="Elsen S."/>
            <person name="Gutsche I."/>
        </authorList>
    </citation>
    <scope>FUNCTION</scope>
    <scope>SUBUNIT</scope>
    <scope>DISRUPTION PHENOTYPE</scope>
</reference>
<proteinExistence type="evidence at protein level"/>
<organism>
    <name type="scientific">Pseudomonas aeruginosa (strain ATCC 15692 / DSM 22644 / CIP 104116 / JCM 14847 / LMG 12228 / 1C / PRS 101 / PAO1)</name>
    <dbReference type="NCBI Taxonomy" id="208964"/>
    <lineage>
        <taxon>Bacteria</taxon>
        <taxon>Pseudomonadati</taxon>
        <taxon>Pseudomonadota</taxon>
        <taxon>Gammaproteobacteria</taxon>
        <taxon>Pseudomonadales</taxon>
        <taxon>Pseudomonadaceae</taxon>
        <taxon>Pseudomonas</taxon>
    </lineage>
</organism>
<feature type="chain" id="PRO_0000448879" description="Lysine decarboxylase LdcA">
    <location>
        <begin position="1"/>
        <end position="751"/>
    </location>
</feature>
<sequence length="751" mass="82757">MYKDLKFPVLIVHRDIKADTVAGERVRGIAHELEQDGFSILSTASSAEGRIVASTHHGLACILVAAEGAGENQRLLQDVVELIRVARVRAPQLPIFALGEQVTIENAPAESMADLHQLRGILYLFEDTVPFLARQVARAARNYLAGLLPPFFRALVEHTAQSNYSWHTPGHGGGVAYRKSPVGQAFHQFFGENTLRSDLSVSVPELGSLLDHTGPLAEAEDRAARNFGADHTFFVINGTSTANKIVWHSMVGREDLVLVDRNCHKSILHSIIMTGAIPLYLTPERNELGIIGPIPLSEFSKQSIAAKIAASPLARGREPKVKLAVVTNSTYDGLCYNAELIKQTLGDSVEVLHFDEAWYAYAAFHEFYDGRYGMGTSRSEEGPLVFATHSTHKMLAAFSQASMIHVQDGGTRKLDVARFNEAFMMHISTSPQYGIIASLDVASAMMEGPAGRSLIQETFDEALSFRRALANVRQNLDRNDWWFGVWQPEQVEGTDQVGTHDWVLEPSADWHGFGDIAEDYVLLDPIKVTLTTPGLSAGGKLSEQGIPAAIVSRFLWERGLVVEKTGLYSFLVLFSMGITKGKWSTLVTELLEFKRCYDANLPLLDVLPSVAQAGGKRYNGVGLRDLSDAMHASYRDNATAKAMKRMYTVLPEVAMRPSEAYDKLVRGEVEAVPIARLEGRIAAVMLVPYPPGIPLIMPGERFTEATRSILDYLEFARTFERAFPGFDSDVHGLQHQDGPSGRCYTVECIKE</sequence>
<keyword id="KW-0002">3D-structure</keyword>
<keyword id="KW-0210">Decarboxylase</keyword>
<keyword id="KW-0456">Lyase</keyword>
<keyword id="KW-0663">Pyridoxal phosphate</keyword>
<keyword id="KW-1185">Reference proteome</keyword>
<keyword id="KW-0843">Virulence</keyword>
<dbReference type="EC" id="4.1.1.18" evidence="1"/>
<dbReference type="EMBL" id="AE004091">
    <property type="protein sequence ID" value="AAG05207.1"/>
    <property type="molecule type" value="Genomic_DNA"/>
</dbReference>
<dbReference type="PIR" id="D83418">
    <property type="entry name" value="D83418"/>
</dbReference>
<dbReference type="RefSeq" id="NP_250509.1">
    <property type="nucleotide sequence ID" value="NC_002516.2"/>
</dbReference>
<dbReference type="RefSeq" id="WP_003113592.1">
    <property type="nucleotide sequence ID" value="NZ_QZGE01000003.1"/>
</dbReference>
<dbReference type="PDB" id="6Q6I">
    <property type="method" value="EM"/>
    <property type="resolution" value="3.70 A"/>
    <property type="chains" value="A=1-751"/>
</dbReference>
<dbReference type="PDBsum" id="6Q6I"/>
<dbReference type="SMR" id="Q9I2S7"/>
<dbReference type="FunCoup" id="Q9I2S7">
    <property type="interactions" value="116"/>
</dbReference>
<dbReference type="STRING" id="208964.PA1818"/>
<dbReference type="PaxDb" id="208964-PA1818"/>
<dbReference type="GeneID" id="878596"/>
<dbReference type="KEGG" id="pae:PA1818"/>
<dbReference type="PATRIC" id="fig|208964.12.peg.1888"/>
<dbReference type="PseudoCAP" id="PA1818"/>
<dbReference type="HOGENOM" id="CLU_014292_3_0_6"/>
<dbReference type="InParanoid" id="Q9I2S7"/>
<dbReference type="OrthoDB" id="9761189at2"/>
<dbReference type="PhylomeDB" id="Q9I2S7"/>
<dbReference type="BioCyc" id="PAER208964:G1FZ6-1856-MONOMER"/>
<dbReference type="Proteomes" id="UP000002438">
    <property type="component" value="Chromosome"/>
</dbReference>
<dbReference type="GO" id="GO:0005737">
    <property type="term" value="C:cytoplasm"/>
    <property type="evidence" value="ECO:0007669"/>
    <property type="project" value="InterPro"/>
</dbReference>
<dbReference type="GO" id="GO:0008923">
    <property type="term" value="F:lysine decarboxylase activity"/>
    <property type="evidence" value="ECO:0007669"/>
    <property type="project" value="UniProtKB-EC"/>
</dbReference>
<dbReference type="GO" id="GO:0006520">
    <property type="term" value="P:amino acid metabolic process"/>
    <property type="evidence" value="ECO:0007669"/>
    <property type="project" value="InterPro"/>
</dbReference>
<dbReference type="CDD" id="cd00615">
    <property type="entry name" value="Orn_deC_like"/>
    <property type="match status" value="1"/>
</dbReference>
<dbReference type="FunFam" id="3.40.640.10:FF:000008">
    <property type="entry name" value="Lysine decarboxylase, inducible"/>
    <property type="match status" value="1"/>
</dbReference>
<dbReference type="Gene3D" id="3.40.50.2300">
    <property type="match status" value="1"/>
</dbReference>
<dbReference type="Gene3D" id="3.90.1150.10">
    <property type="entry name" value="Aspartate Aminotransferase, domain 1"/>
    <property type="match status" value="1"/>
</dbReference>
<dbReference type="Gene3D" id="3.90.100.10">
    <property type="entry name" value="Orn/Lys/Arg decarboxylase, C-terminal domain"/>
    <property type="match status" value="1"/>
</dbReference>
<dbReference type="Gene3D" id="3.40.640.10">
    <property type="entry name" value="Type I PLP-dependent aspartate aminotransferase-like (Major domain)"/>
    <property type="match status" value="1"/>
</dbReference>
<dbReference type="InterPro" id="IPR005308">
    <property type="entry name" value="OKR_de-COase_N"/>
</dbReference>
<dbReference type="InterPro" id="IPR011193">
    <property type="entry name" value="Orn/lys/arg_de-COase"/>
</dbReference>
<dbReference type="InterPro" id="IPR000310">
    <property type="entry name" value="Orn/Lys/Arg_deCO2ase_major_dom"/>
</dbReference>
<dbReference type="InterPro" id="IPR008286">
    <property type="entry name" value="Prn/Lys/Arg_de-COase_C"/>
</dbReference>
<dbReference type="InterPro" id="IPR036633">
    <property type="entry name" value="Prn/Lys/Arg_de-COase_C_sf"/>
</dbReference>
<dbReference type="InterPro" id="IPR015424">
    <property type="entry name" value="PyrdxlP-dep_Trfase"/>
</dbReference>
<dbReference type="InterPro" id="IPR015421">
    <property type="entry name" value="PyrdxlP-dep_Trfase_major"/>
</dbReference>
<dbReference type="InterPro" id="IPR015422">
    <property type="entry name" value="PyrdxlP-dep_Trfase_small"/>
</dbReference>
<dbReference type="PANTHER" id="PTHR45229:SF3">
    <property type="entry name" value="BIODEGRADATIVE ARGININE DECARBOXYLASE"/>
    <property type="match status" value="1"/>
</dbReference>
<dbReference type="PANTHER" id="PTHR45229">
    <property type="entry name" value="CONSTITUTIVE ORNITHINE DECARBOXYLASE"/>
    <property type="match status" value="1"/>
</dbReference>
<dbReference type="Pfam" id="PF01276">
    <property type="entry name" value="OKR_DC_1"/>
    <property type="match status" value="1"/>
</dbReference>
<dbReference type="Pfam" id="PF03711">
    <property type="entry name" value="OKR_DC_1_C"/>
    <property type="match status" value="1"/>
</dbReference>
<dbReference type="Pfam" id="PF03709">
    <property type="entry name" value="OKR_DC_1_N"/>
    <property type="match status" value="1"/>
</dbReference>
<dbReference type="PIRSF" id="PIRSF009393">
    <property type="entry name" value="Orn_decarb"/>
    <property type="match status" value="1"/>
</dbReference>
<dbReference type="SUPFAM" id="SSF55904">
    <property type="entry name" value="Ornithine decarboxylase C-terminal domain"/>
    <property type="match status" value="1"/>
</dbReference>
<dbReference type="SUPFAM" id="SSF53383">
    <property type="entry name" value="PLP-dependent transferases"/>
    <property type="match status" value="1"/>
</dbReference>
<dbReference type="PROSITE" id="PS00703">
    <property type="entry name" value="OKR_DC_1"/>
    <property type="match status" value="1"/>
</dbReference>
<accession>Q9I2S7</accession>
<protein>
    <recommendedName>
        <fullName evidence="3">Lysine decarboxylase LdcA</fullName>
        <ecNumber evidence="1">4.1.1.18</ecNumber>
    </recommendedName>
</protein>